<comment type="function">
    <text evidence="1 6">Component of the outer dynein arm-docking complex (ODA-DC) that mediates outer dynein arms (ODA) binding onto the doublet microtubule (By similarity). Involved in mediating assembly of both ODAs and their axonemal docking complex onto ciliary microtubules (PubMed:23849778).</text>
</comment>
<comment type="subunit">
    <text evidence="2 8">Component of the outer dynein arm-docking complex along with ODAD1, ODAD3, and ODAD4. Interacts with CFAP61 (PubMed:34792097).</text>
</comment>
<comment type="subcellular location">
    <subcellularLocation>
        <location evidence="2">Cytoplasm</location>
        <location evidence="2">Cytoskeleton</location>
        <location evidence="2">Cilium axoneme</location>
    </subcellularLocation>
    <subcellularLocation>
        <location evidence="2">Cytoplasm</location>
        <location evidence="2">Cytoskeleton</location>
        <location evidence="2">Cilium basal body</location>
    </subcellularLocation>
</comment>
<comment type="tissue specificity">
    <text evidence="7">Highly expressed in testis. In males, also detected at lower levels in lung, brain, liver and muscle. In females, detected in ovary.</text>
</comment>
<comment type="developmental stage">
    <text evidence="6">At 7.5 dpc, expressed in the ventral node.</text>
</comment>
<proteinExistence type="evidence at protein level"/>
<organism>
    <name type="scientific">Mus musculus</name>
    <name type="common">Mouse</name>
    <dbReference type="NCBI Taxonomy" id="10090"/>
    <lineage>
        <taxon>Eukaryota</taxon>
        <taxon>Metazoa</taxon>
        <taxon>Chordata</taxon>
        <taxon>Craniata</taxon>
        <taxon>Vertebrata</taxon>
        <taxon>Euteleostomi</taxon>
        <taxon>Mammalia</taxon>
        <taxon>Eutheria</taxon>
        <taxon>Euarchontoglires</taxon>
        <taxon>Glires</taxon>
        <taxon>Rodentia</taxon>
        <taxon>Myomorpha</taxon>
        <taxon>Muroidea</taxon>
        <taxon>Muridae</taxon>
        <taxon>Murinae</taxon>
        <taxon>Mus</taxon>
        <taxon>Mus</taxon>
    </lineage>
</organism>
<gene>
    <name evidence="9" type="primary">Odad2</name>
    <name type="synonym">Armc4</name>
</gene>
<sequence length="1037" mass="115266">MGVALTRLAQWTAAGYETGTLEITPLNESILNEITKFVESFSYKYPQEAKFVFVEPLEWKTYLEPSAFELGYVVSATTAESEETGKDGQPLLFLSVPYIKVRSFGQLSQLLSIATDSKLQEAQACIEANRDPVVKILGPDYNEMKEDPTRLTLLDTIIKDKETYMKRKVAILLKQLDLHLLNHSLKYISLEISLNPGTFKKDIELLKRFSGKGEQTVLESIEYTSDYEFSNGCRAPPWRQIQGEICYVLVKPHDMETLCLTCSTEGVFLNGGKTEEEGEINYERKGEIYKDLVTCLKDKSPVFSENMSKHEIRFTEEQQKDNQIFEKPKTEDGHSSVAGSEKSKIEKISFGKSPMTKRLEPSLNWRVTVDYKDHKSSIKDSQEEKQGKLEKSSSVSVAPSRAQSHRKGGEKVEETVSESSSESEEDEEPPDHRQEANADLPSEYWQIQKLVKYLKGGNQTATVIALCSMRDFNLAQETCQLAIRDVGGLEVLINLLDTDEVKCKIGSLKILKEISHNPQIRRNIVDLGGLPIMVNILDSPHKSLKCLSAETIANVAKFKRARRAVRQHGGITKLVALLDCGQNSTEPTQPSLYETRDVEVARCGALALWSCSKSHSNKEAIRKAGGIPLLARLLKTSHENMLIPVVGTLQECASEENYRAAIKAERIIENLVKNLNSENEQLQEHCAMAIYQCAEDEETRDLVRLHGGLKPLASLLNNTDNKERLAAVTGAIWKCSISKENVIKFREYKAIETLVGLLTDQPEEVLVNVVGALGECCQEYENRVLVRKCGGIQPLVNLLVGINQALLVNVTKAVGACAVEPESMAIIDRLDGVRLLWSLLKNPHPDVKASAAWALCPCIENAKDAGEMVRSFVGGLELVVNLLKSDNKEVLASVCAAITNIAKDQENLAVITDHGVVPLLSKLANTNNDKLRRHLAEAISRCCMWGRNRVAFGEHKAVAPLVRYLKSNDTNVHRATAQALYQLSEDADNCITMHENGAVKLLLDMVGSPDQDLQEAAAGCISNIRRLALATEKARYN</sequence>
<feature type="chain" id="PRO_0000425145" description="Outer dynein arm-docking complex subunit 2">
    <location>
        <begin position="1"/>
        <end position="1037"/>
    </location>
</feature>
<feature type="repeat" description="ARM 2" evidence="3">
    <location>
        <begin position="477"/>
        <end position="516"/>
    </location>
</feature>
<feature type="repeat" description="ARM 3" evidence="3">
    <location>
        <begin position="518"/>
        <end position="557"/>
    </location>
</feature>
<feature type="repeat" description="ARM 1" evidence="4">
    <location>
        <begin position="528"/>
        <end position="570"/>
    </location>
</feature>
<feature type="repeat" description="ARM 4" evidence="3">
    <location>
        <begin position="615"/>
        <end position="654"/>
    </location>
</feature>
<feature type="repeat" description="ARM 5" evidence="3">
    <location>
        <begin position="656"/>
        <end position="695"/>
    </location>
</feature>
<feature type="repeat" description="ARM 6" evidence="3">
    <location>
        <begin position="739"/>
        <end position="778"/>
    </location>
</feature>
<feature type="repeat" description="ARM 7" evidence="3">
    <location>
        <begin position="821"/>
        <end position="860"/>
    </location>
</feature>
<feature type="repeat" description="ARM 8" evidence="3">
    <location>
        <begin position="864"/>
        <end position="903"/>
    </location>
</feature>
<feature type="repeat" description="ARM 9" evidence="3">
    <location>
        <begin position="905"/>
        <end position="944"/>
    </location>
</feature>
<feature type="repeat" description="ARM 10" evidence="3">
    <location>
        <begin position="946"/>
        <end position="985"/>
    </location>
</feature>
<feature type="region of interest" description="Disordered" evidence="5">
    <location>
        <begin position="316"/>
        <end position="353"/>
    </location>
</feature>
<feature type="region of interest" description="Disordered" evidence="5">
    <location>
        <begin position="376"/>
        <end position="439"/>
    </location>
</feature>
<feature type="compositionally biased region" description="Basic and acidic residues" evidence="5">
    <location>
        <begin position="316"/>
        <end position="334"/>
    </location>
</feature>
<feature type="compositionally biased region" description="Basic and acidic residues" evidence="5">
    <location>
        <begin position="376"/>
        <end position="391"/>
    </location>
</feature>
<feature type="modified residue" description="N6-methyllysine" evidence="2">
    <location>
        <position position="545"/>
    </location>
</feature>
<feature type="mutagenesis site" description="In Aotea; randomization of laterality. Mutants exhibit a range of cardiovascular anomalies, including right aortic arch, perimembranous and muscular ventricular septal defects, ventricular non-compaction and anomalous venous return. Respiratory cilia are either immotile or have slow dyskinetic motion compared to wild-type animals. Tracheal airway cilia show a marked reduction in outer dynein arms. In the brain, fluid flow is generated by ependymal cilia, but is slower than in wild-type animals. Aotea mutants develop hydrocephalus at 3 to 4 weeks of age and die." evidence="6">
    <original>M</original>
    <variation>K</variation>
    <location>
        <position position="993"/>
    </location>
</feature>
<name>ODAD2_MOUSE</name>
<keyword id="KW-0966">Cell projection</keyword>
<keyword id="KW-0969">Cilium</keyword>
<keyword id="KW-0970">Cilium biogenesis/degradation</keyword>
<keyword id="KW-0963">Cytoplasm</keyword>
<keyword id="KW-0206">Cytoskeleton</keyword>
<keyword id="KW-0488">Methylation</keyword>
<keyword id="KW-1185">Reference proteome</keyword>
<keyword id="KW-0677">Repeat</keyword>
<dbReference type="EMBL" id="AC139334">
    <property type="status" value="NOT_ANNOTATED_CDS"/>
    <property type="molecule type" value="Genomic_DNA"/>
</dbReference>
<dbReference type="EMBL" id="AC147269">
    <property type="status" value="NOT_ANNOTATED_CDS"/>
    <property type="molecule type" value="Genomic_DNA"/>
</dbReference>
<dbReference type="EMBL" id="CH466592">
    <property type="protein sequence ID" value="EDL23026.1"/>
    <property type="molecule type" value="Genomic_DNA"/>
</dbReference>
<dbReference type="EMBL" id="BC158097">
    <property type="protein sequence ID" value="AAI58098.1"/>
    <property type="molecule type" value="mRNA"/>
</dbReference>
<dbReference type="EMBL" id="AK015498">
    <property type="protein sequence ID" value="BAB29870.2"/>
    <property type="molecule type" value="mRNA"/>
</dbReference>
<dbReference type="CCDS" id="CCDS37729.1"/>
<dbReference type="RefSeq" id="NP_001074862.1">
    <property type="nucleotide sequence ID" value="NM_001081393.1"/>
</dbReference>
<dbReference type="RefSeq" id="NP_001344421.1">
    <property type="nucleotide sequence ID" value="NM_001357492.1"/>
</dbReference>
<dbReference type="RefSeq" id="XP_006526374.1">
    <property type="nucleotide sequence ID" value="XM_006526311.3"/>
</dbReference>
<dbReference type="RefSeq" id="XP_030106482.1">
    <property type="nucleotide sequence ID" value="XM_030250622.1"/>
</dbReference>
<dbReference type="SMR" id="B2RY50"/>
<dbReference type="FunCoup" id="B2RY50">
    <property type="interactions" value="41"/>
</dbReference>
<dbReference type="STRING" id="10090.ENSMUSP00000157197"/>
<dbReference type="iPTMnet" id="B2RY50"/>
<dbReference type="PhosphoSitePlus" id="B2RY50"/>
<dbReference type="SwissPalm" id="B2RY50"/>
<dbReference type="PaxDb" id="10090-ENSMUSP00000080028"/>
<dbReference type="ProteomicsDB" id="283225"/>
<dbReference type="Antibodypedia" id="26109">
    <property type="antibodies" value="33 antibodies from 12 providers"/>
</dbReference>
<dbReference type="Ensembl" id="ENSMUST00000081275.5">
    <property type="protein sequence ID" value="ENSMUSP00000080028.5"/>
    <property type="gene ID" value="ENSMUSG00000061802.7"/>
</dbReference>
<dbReference type="Ensembl" id="ENSMUST00000234788.2">
    <property type="protein sequence ID" value="ENSMUSP00000157197.2"/>
    <property type="gene ID" value="ENSMUSG00000061802.7"/>
</dbReference>
<dbReference type="GeneID" id="74934"/>
<dbReference type="UCSC" id="uc008dzq.1">
    <property type="organism name" value="mouse"/>
</dbReference>
<dbReference type="AGR" id="MGI:1922184"/>
<dbReference type="MGI" id="MGI:1922184">
    <property type="gene designation" value="Odad2"/>
</dbReference>
<dbReference type="VEuPathDB" id="HostDB:ENSMUSG00000061802"/>
<dbReference type="eggNOG" id="KOG0167">
    <property type="taxonomic scope" value="Eukaryota"/>
</dbReference>
<dbReference type="GeneTree" id="ENSGT00940000156625"/>
<dbReference type="HOGENOM" id="CLU_011703_0_0_1"/>
<dbReference type="InParanoid" id="B2RY50"/>
<dbReference type="OMA" id="HAPPWRQ"/>
<dbReference type="OrthoDB" id="1683831at2759"/>
<dbReference type="PhylomeDB" id="B2RY50"/>
<dbReference type="TreeFam" id="TF324155"/>
<dbReference type="BioGRID-ORCS" id="74934">
    <property type="hits" value="1 hit in 76 CRISPR screens"/>
</dbReference>
<dbReference type="ChiTaRS" id="Armc4">
    <property type="organism name" value="mouse"/>
</dbReference>
<dbReference type="PRO" id="PR:B2RY50"/>
<dbReference type="Proteomes" id="UP000000589">
    <property type="component" value="Chromosome 18"/>
</dbReference>
<dbReference type="RNAct" id="B2RY50">
    <property type="molecule type" value="protein"/>
</dbReference>
<dbReference type="Bgee" id="ENSMUSG00000061802">
    <property type="expression patterns" value="Expressed in otolith organ and 42 other cell types or tissues"/>
</dbReference>
<dbReference type="ExpressionAtlas" id="B2RY50">
    <property type="expression patterns" value="baseline and differential"/>
</dbReference>
<dbReference type="GO" id="GO:0005930">
    <property type="term" value="C:axoneme"/>
    <property type="evidence" value="ECO:0000266"/>
    <property type="project" value="MGI"/>
</dbReference>
<dbReference type="GO" id="GO:0097546">
    <property type="term" value="C:ciliary base"/>
    <property type="evidence" value="ECO:0000266"/>
    <property type="project" value="MGI"/>
</dbReference>
<dbReference type="GO" id="GO:0003341">
    <property type="term" value="P:cilium movement"/>
    <property type="evidence" value="ECO:0000315"/>
    <property type="project" value="MGI"/>
</dbReference>
<dbReference type="GO" id="GO:0007368">
    <property type="term" value="P:determination of left/right symmetry"/>
    <property type="evidence" value="ECO:0000315"/>
    <property type="project" value="MGI"/>
</dbReference>
<dbReference type="GO" id="GO:0007507">
    <property type="term" value="P:heart development"/>
    <property type="evidence" value="ECO:0000315"/>
    <property type="project" value="MGI"/>
</dbReference>
<dbReference type="GO" id="GO:0036158">
    <property type="term" value="P:outer dynein arm assembly"/>
    <property type="evidence" value="ECO:0000315"/>
    <property type="project" value="MGI"/>
</dbReference>
<dbReference type="GO" id="GO:0003356">
    <property type="term" value="P:regulation of cilium beat frequency"/>
    <property type="evidence" value="ECO:0007669"/>
    <property type="project" value="Ensembl"/>
</dbReference>
<dbReference type="GO" id="GO:0021591">
    <property type="term" value="P:ventricular system development"/>
    <property type="evidence" value="ECO:0000315"/>
    <property type="project" value="MGI"/>
</dbReference>
<dbReference type="FunFam" id="1.25.10.10:FF:000546">
    <property type="entry name" value="Armadillo repeat containing 4"/>
    <property type="match status" value="1"/>
</dbReference>
<dbReference type="FunFam" id="1.25.10.10:FF:000605">
    <property type="entry name" value="Armadillo repeat containing 4"/>
    <property type="match status" value="1"/>
</dbReference>
<dbReference type="FunFam" id="1.25.10.10:FF:000383">
    <property type="entry name" value="armadillo repeat-containing protein 4"/>
    <property type="match status" value="1"/>
</dbReference>
<dbReference type="FunFam" id="1.25.10.10:FF:000351">
    <property type="entry name" value="armadillo repeat-containing protein 4 isoform X1"/>
    <property type="match status" value="1"/>
</dbReference>
<dbReference type="Gene3D" id="1.25.10.10">
    <property type="entry name" value="Leucine-rich Repeat Variant"/>
    <property type="match status" value="4"/>
</dbReference>
<dbReference type="InterPro" id="IPR011989">
    <property type="entry name" value="ARM-like"/>
</dbReference>
<dbReference type="InterPro" id="IPR016024">
    <property type="entry name" value="ARM-type_fold"/>
</dbReference>
<dbReference type="InterPro" id="IPR000225">
    <property type="entry name" value="Armadillo"/>
</dbReference>
<dbReference type="PANTHER" id="PTHR46241">
    <property type="entry name" value="ARMADILLO REPEAT-CONTAINING PROTEIN 4 ARMC4"/>
    <property type="match status" value="1"/>
</dbReference>
<dbReference type="PANTHER" id="PTHR46241:SF1">
    <property type="entry name" value="OUTER DYNEIN ARM-DOCKING COMPLEX SUBUNIT 2"/>
    <property type="match status" value="1"/>
</dbReference>
<dbReference type="Pfam" id="PF00514">
    <property type="entry name" value="Arm"/>
    <property type="match status" value="1"/>
</dbReference>
<dbReference type="Pfam" id="PF13646">
    <property type="entry name" value="HEAT_2"/>
    <property type="match status" value="1"/>
</dbReference>
<dbReference type="SMART" id="SM00185">
    <property type="entry name" value="ARM"/>
    <property type="match status" value="13"/>
</dbReference>
<dbReference type="SUPFAM" id="SSF48371">
    <property type="entry name" value="ARM repeat"/>
    <property type="match status" value="2"/>
</dbReference>
<dbReference type="PROSITE" id="PS50176">
    <property type="entry name" value="ARM_REPEAT"/>
    <property type="match status" value="3"/>
</dbReference>
<reference key="1">
    <citation type="journal article" date="2009" name="PLoS Biol.">
        <title>Lineage-specific biology revealed by a finished genome assembly of the mouse.</title>
        <authorList>
            <person name="Church D.M."/>
            <person name="Goodstadt L."/>
            <person name="Hillier L.W."/>
            <person name="Zody M.C."/>
            <person name="Goldstein S."/>
            <person name="She X."/>
            <person name="Bult C.J."/>
            <person name="Agarwala R."/>
            <person name="Cherry J.L."/>
            <person name="DiCuccio M."/>
            <person name="Hlavina W."/>
            <person name="Kapustin Y."/>
            <person name="Meric P."/>
            <person name="Maglott D."/>
            <person name="Birtle Z."/>
            <person name="Marques A.C."/>
            <person name="Graves T."/>
            <person name="Zhou S."/>
            <person name="Teague B."/>
            <person name="Potamousis K."/>
            <person name="Churas C."/>
            <person name="Place M."/>
            <person name="Herschleb J."/>
            <person name="Runnheim R."/>
            <person name="Forrest D."/>
            <person name="Amos-Landgraf J."/>
            <person name="Schwartz D.C."/>
            <person name="Cheng Z."/>
            <person name="Lindblad-Toh K."/>
            <person name="Eichler E.E."/>
            <person name="Ponting C.P."/>
        </authorList>
    </citation>
    <scope>NUCLEOTIDE SEQUENCE [LARGE SCALE GENOMIC DNA]</scope>
    <source>
        <strain>C57BL/6J</strain>
    </source>
</reference>
<reference key="2">
    <citation type="submission" date="2005-09" db="EMBL/GenBank/DDBJ databases">
        <authorList>
            <person name="Mural R.J."/>
            <person name="Adams M.D."/>
            <person name="Myers E.W."/>
            <person name="Smith H.O."/>
            <person name="Venter J.C."/>
        </authorList>
    </citation>
    <scope>NUCLEOTIDE SEQUENCE [LARGE SCALE GENOMIC DNA]</scope>
</reference>
<reference key="3">
    <citation type="journal article" date="2004" name="Genome Res.">
        <title>The status, quality, and expansion of the NIH full-length cDNA project: the Mammalian Gene Collection (MGC).</title>
        <authorList>
            <consortium name="The MGC Project Team"/>
        </authorList>
    </citation>
    <scope>NUCLEOTIDE SEQUENCE [LARGE SCALE MRNA]</scope>
</reference>
<reference key="4">
    <citation type="journal article" date="2005" name="Science">
        <title>The transcriptional landscape of the mammalian genome.</title>
        <authorList>
            <person name="Carninci P."/>
            <person name="Kasukawa T."/>
            <person name="Katayama S."/>
            <person name="Gough J."/>
            <person name="Frith M.C."/>
            <person name="Maeda N."/>
            <person name="Oyama R."/>
            <person name="Ravasi T."/>
            <person name="Lenhard B."/>
            <person name="Wells C."/>
            <person name="Kodzius R."/>
            <person name="Shimokawa K."/>
            <person name="Bajic V.B."/>
            <person name="Brenner S.E."/>
            <person name="Batalov S."/>
            <person name="Forrest A.R."/>
            <person name="Zavolan M."/>
            <person name="Davis M.J."/>
            <person name="Wilming L.G."/>
            <person name="Aidinis V."/>
            <person name="Allen J.E."/>
            <person name="Ambesi-Impiombato A."/>
            <person name="Apweiler R."/>
            <person name="Aturaliya R.N."/>
            <person name="Bailey T.L."/>
            <person name="Bansal M."/>
            <person name="Baxter L."/>
            <person name="Beisel K.W."/>
            <person name="Bersano T."/>
            <person name="Bono H."/>
            <person name="Chalk A.M."/>
            <person name="Chiu K.P."/>
            <person name="Choudhary V."/>
            <person name="Christoffels A."/>
            <person name="Clutterbuck D.R."/>
            <person name="Crowe M.L."/>
            <person name="Dalla E."/>
            <person name="Dalrymple B.P."/>
            <person name="de Bono B."/>
            <person name="Della Gatta G."/>
            <person name="di Bernardo D."/>
            <person name="Down T."/>
            <person name="Engstrom P."/>
            <person name="Fagiolini M."/>
            <person name="Faulkner G."/>
            <person name="Fletcher C.F."/>
            <person name="Fukushima T."/>
            <person name="Furuno M."/>
            <person name="Futaki S."/>
            <person name="Gariboldi M."/>
            <person name="Georgii-Hemming P."/>
            <person name="Gingeras T.R."/>
            <person name="Gojobori T."/>
            <person name="Green R.E."/>
            <person name="Gustincich S."/>
            <person name="Harbers M."/>
            <person name="Hayashi Y."/>
            <person name="Hensch T.K."/>
            <person name="Hirokawa N."/>
            <person name="Hill D."/>
            <person name="Huminiecki L."/>
            <person name="Iacono M."/>
            <person name="Ikeo K."/>
            <person name="Iwama A."/>
            <person name="Ishikawa T."/>
            <person name="Jakt M."/>
            <person name="Kanapin A."/>
            <person name="Katoh M."/>
            <person name="Kawasawa Y."/>
            <person name="Kelso J."/>
            <person name="Kitamura H."/>
            <person name="Kitano H."/>
            <person name="Kollias G."/>
            <person name="Krishnan S.P."/>
            <person name="Kruger A."/>
            <person name="Kummerfeld S.K."/>
            <person name="Kurochkin I.V."/>
            <person name="Lareau L.F."/>
            <person name="Lazarevic D."/>
            <person name="Lipovich L."/>
            <person name="Liu J."/>
            <person name="Liuni S."/>
            <person name="McWilliam S."/>
            <person name="Madan Babu M."/>
            <person name="Madera M."/>
            <person name="Marchionni L."/>
            <person name="Matsuda H."/>
            <person name="Matsuzawa S."/>
            <person name="Miki H."/>
            <person name="Mignone F."/>
            <person name="Miyake S."/>
            <person name="Morris K."/>
            <person name="Mottagui-Tabar S."/>
            <person name="Mulder N."/>
            <person name="Nakano N."/>
            <person name="Nakauchi H."/>
            <person name="Ng P."/>
            <person name="Nilsson R."/>
            <person name="Nishiguchi S."/>
            <person name="Nishikawa S."/>
            <person name="Nori F."/>
            <person name="Ohara O."/>
            <person name="Okazaki Y."/>
            <person name="Orlando V."/>
            <person name="Pang K.C."/>
            <person name="Pavan W.J."/>
            <person name="Pavesi G."/>
            <person name="Pesole G."/>
            <person name="Petrovsky N."/>
            <person name="Piazza S."/>
            <person name="Reed J."/>
            <person name="Reid J.F."/>
            <person name="Ring B.Z."/>
            <person name="Ringwald M."/>
            <person name="Rost B."/>
            <person name="Ruan Y."/>
            <person name="Salzberg S.L."/>
            <person name="Sandelin A."/>
            <person name="Schneider C."/>
            <person name="Schoenbach C."/>
            <person name="Sekiguchi K."/>
            <person name="Semple C.A."/>
            <person name="Seno S."/>
            <person name="Sessa L."/>
            <person name="Sheng Y."/>
            <person name="Shibata Y."/>
            <person name="Shimada H."/>
            <person name="Shimada K."/>
            <person name="Silva D."/>
            <person name="Sinclair B."/>
            <person name="Sperling S."/>
            <person name="Stupka E."/>
            <person name="Sugiura K."/>
            <person name="Sultana R."/>
            <person name="Takenaka Y."/>
            <person name="Taki K."/>
            <person name="Tammoja K."/>
            <person name="Tan S.L."/>
            <person name="Tang S."/>
            <person name="Taylor M.S."/>
            <person name="Tegner J."/>
            <person name="Teichmann S.A."/>
            <person name="Ueda H.R."/>
            <person name="van Nimwegen E."/>
            <person name="Verardo R."/>
            <person name="Wei C.L."/>
            <person name="Yagi K."/>
            <person name="Yamanishi H."/>
            <person name="Zabarovsky E."/>
            <person name="Zhu S."/>
            <person name="Zimmer A."/>
            <person name="Hide W."/>
            <person name="Bult C."/>
            <person name="Grimmond S.M."/>
            <person name="Teasdale R.D."/>
            <person name="Liu E.T."/>
            <person name="Brusic V."/>
            <person name="Quackenbush J."/>
            <person name="Wahlestedt C."/>
            <person name="Mattick J.S."/>
            <person name="Hume D.A."/>
            <person name="Kai C."/>
            <person name="Sasaki D."/>
            <person name="Tomaru Y."/>
            <person name="Fukuda S."/>
            <person name="Kanamori-Katayama M."/>
            <person name="Suzuki M."/>
            <person name="Aoki J."/>
            <person name="Arakawa T."/>
            <person name="Iida J."/>
            <person name="Imamura K."/>
            <person name="Itoh M."/>
            <person name="Kato T."/>
            <person name="Kawaji H."/>
            <person name="Kawagashira N."/>
            <person name="Kawashima T."/>
            <person name="Kojima M."/>
            <person name="Kondo S."/>
            <person name="Konno H."/>
            <person name="Nakano K."/>
            <person name="Ninomiya N."/>
            <person name="Nishio T."/>
            <person name="Okada M."/>
            <person name="Plessy C."/>
            <person name="Shibata K."/>
            <person name="Shiraki T."/>
            <person name="Suzuki S."/>
            <person name="Tagami M."/>
            <person name="Waki K."/>
            <person name="Watahiki A."/>
            <person name="Okamura-Oho Y."/>
            <person name="Suzuki H."/>
            <person name="Kawai J."/>
            <person name="Hayashizaki Y."/>
        </authorList>
    </citation>
    <scope>NUCLEOTIDE SEQUENCE [LARGE SCALE MRNA] OF 1-383</scope>
    <source>
        <strain>C57BL/6J</strain>
        <tissue>Testis</tissue>
    </source>
</reference>
<reference key="5">
    <citation type="journal article" date="2010" name="Cell">
        <title>A tissue-specific atlas of mouse protein phosphorylation and expression.</title>
        <authorList>
            <person name="Huttlin E.L."/>
            <person name="Jedrychowski M.P."/>
            <person name="Elias J.E."/>
            <person name="Goswami T."/>
            <person name="Rad R."/>
            <person name="Beausoleil S.A."/>
            <person name="Villen J."/>
            <person name="Haas W."/>
            <person name="Sowa M.E."/>
            <person name="Gygi S.P."/>
        </authorList>
    </citation>
    <scope>IDENTIFICATION BY MASS SPECTROMETRY [LARGE SCALE ANALYSIS]</scope>
    <source>
        <tissue>Testis</tissue>
    </source>
</reference>
<reference key="6">
    <citation type="journal article" date="2013" name="Am. J. Hum. Genet.">
        <title>ARMC4 mutations cause primary ciliary dyskinesia with randomization of left/right body asymmetry.</title>
        <authorList>
            <person name="Hjeij R."/>
            <person name="Lindstrand A."/>
            <person name="Francis R."/>
            <person name="Zariwala M.A."/>
            <person name="Liu X."/>
            <person name="Li Y."/>
            <person name="Damerla R."/>
            <person name="Dougherty G.W."/>
            <person name="Abouhamed M."/>
            <person name="Olbrich H."/>
            <person name="Loges N.T."/>
            <person name="Pennekamp P."/>
            <person name="Davis E.E."/>
            <person name="Carvalho C.M."/>
            <person name="Pehlivan D."/>
            <person name="Werner C."/>
            <person name="Raidt J."/>
            <person name="Kohler G."/>
            <person name="Haffner K."/>
            <person name="Reyes-Mugica M."/>
            <person name="Lupski J.R."/>
            <person name="Leigh M.W."/>
            <person name="Rosenfeld M."/>
            <person name="Morgan L.C."/>
            <person name="Knowles M.R."/>
            <person name="Lo C.W."/>
            <person name="Katsanis N."/>
            <person name="Omran H."/>
        </authorList>
    </citation>
    <scope>FUNCTION</scope>
    <scope>DEVELOPMENTAL STAGE</scope>
    <scope>MUTAGENESIS OF MET-993</scope>
</reference>
<reference key="7">
    <citation type="journal article" date="2013" name="Gene">
        <title>Gudu, an Armadillo repeat-containing protein, is required for spermatogenesis in Drosophila.</title>
        <authorList>
            <person name="Cheng W."/>
            <person name="Ip Y.T."/>
            <person name="Xu Z."/>
        </authorList>
    </citation>
    <scope>TISSUE SPECIFICITY</scope>
</reference>
<reference key="8">
    <citation type="journal article" date="2021" name="Development">
        <title>CFAP61 is required for sperm flagellum formation and male fertility in human and mouse.</title>
        <authorList>
            <person name="Liu S."/>
            <person name="Zhang J."/>
            <person name="Kherraf Z.E."/>
            <person name="Sun S."/>
            <person name="Zhang X."/>
            <person name="Cazin C."/>
            <person name="Coutton C."/>
            <person name="Zouari R."/>
            <person name="Zhao S."/>
            <person name="Hu F."/>
            <person name="Fourati Ben Mustapha S."/>
            <person name="Arnoult C."/>
            <person name="Ray P.F."/>
            <person name="Liu M."/>
        </authorList>
    </citation>
    <scope>INTERACTION WITH CFAP61</scope>
</reference>
<protein>
    <recommendedName>
        <fullName>Outer dynein arm-docking complex subunit 2</fullName>
    </recommendedName>
    <alternativeName>
        <fullName>Armadillo repeat-containing protein 4</fullName>
    </alternativeName>
</protein>
<accession>B2RY50</accession>
<accession>Q9CUL6</accession>
<evidence type="ECO:0000250" key="1">
    <source>
        <dbReference type="UniProtKB" id="E1B8W3"/>
    </source>
</evidence>
<evidence type="ECO:0000250" key="2">
    <source>
        <dbReference type="UniProtKB" id="Q5T2S8"/>
    </source>
</evidence>
<evidence type="ECO:0000255" key="3"/>
<evidence type="ECO:0000255" key="4">
    <source>
        <dbReference type="PROSITE-ProRule" id="PRU00259"/>
    </source>
</evidence>
<evidence type="ECO:0000256" key="5">
    <source>
        <dbReference type="SAM" id="MobiDB-lite"/>
    </source>
</evidence>
<evidence type="ECO:0000269" key="6">
    <source>
    </source>
</evidence>
<evidence type="ECO:0000269" key="7">
    <source>
    </source>
</evidence>
<evidence type="ECO:0000269" key="8">
    <source>
    </source>
</evidence>
<evidence type="ECO:0000312" key="9">
    <source>
        <dbReference type="MGI" id="MGI:1922184"/>
    </source>
</evidence>